<protein>
    <recommendedName>
        <fullName>Protamine-YII</fullName>
    </recommendedName>
    <alternativeName>
        <fullName>Clupeine-YII</fullName>
    </alternativeName>
</protein>
<reference key="1">
    <citation type="submission" date="1970-08" db="PIR data bank">
        <authorList>
            <person name="Chang W.J."/>
            <person name="Nukushina M."/>
            <person name="Ishii S."/>
            <person name="Nakahara C."/>
            <person name="Ando T."/>
        </authorList>
    </citation>
    <scope>PROTEIN SEQUENCE</scope>
</reference>
<dbReference type="PIR" id="A37575">
    <property type="entry name" value="CLHR2A"/>
</dbReference>
<dbReference type="Proteomes" id="UP000515152">
    <property type="component" value="Unplaced"/>
</dbReference>
<dbReference type="GO" id="GO:0000786">
    <property type="term" value="C:nucleosome"/>
    <property type="evidence" value="ECO:0007669"/>
    <property type="project" value="UniProtKB-KW"/>
</dbReference>
<dbReference type="GO" id="GO:0005634">
    <property type="term" value="C:nucleus"/>
    <property type="evidence" value="ECO:0007669"/>
    <property type="project" value="UniProtKB-SubCell"/>
</dbReference>
<dbReference type="GO" id="GO:0003677">
    <property type="term" value="F:DNA binding"/>
    <property type="evidence" value="ECO:0007669"/>
    <property type="project" value="UniProtKB-KW"/>
</dbReference>
<dbReference type="GO" id="GO:0030154">
    <property type="term" value="P:cell differentiation"/>
    <property type="evidence" value="ECO:0007669"/>
    <property type="project" value="UniProtKB-KW"/>
</dbReference>
<dbReference type="GO" id="GO:0030261">
    <property type="term" value="P:chromosome condensation"/>
    <property type="evidence" value="ECO:0007669"/>
    <property type="project" value="UniProtKB-KW"/>
</dbReference>
<dbReference type="GO" id="GO:0007283">
    <property type="term" value="P:spermatogenesis"/>
    <property type="evidence" value="ECO:0007669"/>
    <property type="project" value="UniProtKB-KW"/>
</dbReference>
<organism>
    <name type="scientific">Clupea harengus</name>
    <name type="common">Atlantic herring</name>
    <dbReference type="NCBI Taxonomy" id="7950"/>
    <lineage>
        <taxon>Eukaryota</taxon>
        <taxon>Metazoa</taxon>
        <taxon>Chordata</taxon>
        <taxon>Craniata</taxon>
        <taxon>Vertebrata</taxon>
        <taxon>Euteleostomi</taxon>
        <taxon>Actinopterygii</taxon>
        <taxon>Neopterygii</taxon>
        <taxon>Teleostei</taxon>
        <taxon>Clupei</taxon>
        <taxon>Clupeiformes</taxon>
        <taxon>Clupeoidei</taxon>
        <taxon>Clupeidae</taxon>
        <taxon>Clupea</taxon>
    </lineage>
</organism>
<accession>P69008</accession>
<accession>P02335</accession>
<name>PRTY2_CLUHA</name>
<feature type="peptide" id="PRO_0000044305" description="Protamine-YII">
    <location>
        <begin position="1"/>
        <end position="30"/>
    </location>
</feature>
<feature type="region of interest" description="Disordered" evidence="1">
    <location>
        <begin position="1"/>
        <end position="30"/>
    </location>
</feature>
<evidence type="ECO:0000256" key="1">
    <source>
        <dbReference type="SAM" id="MobiDB-lite"/>
    </source>
</evidence>
<proteinExistence type="evidence at protein level"/>
<keyword id="KW-0158">Chromosome</keyword>
<keyword id="KW-0217">Developmental protein</keyword>
<keyword id="KW-0221">Differentiation</keyword>
<keyword id="KW-0903">Direct protein sequencing</keyword>
<keyword id="KW-0226">DNA condensation</keyword>
<keyword id="KW-0238">DNA-binding</keyword>
<keyword id="KW-0544">Nucleosome core</keyword>
<keyword id="KW-0539">Nucleus</keyword>
<keyword id="KW-1185">Reference proteome</keyword>
<keyword id="KW-0744">Spermatogenesis</keyword>
<comment type="function">
    <text>Protamines substitute for histones in the chromatin of sperm during the haploid phase of spermatogenesis. They compact sperm DNA into a highly condensed, stable and inactive complex.</text>
</comment>
<comment type="subcellular location">
    <subcellularLocation>
        <location>Nucleus</location>
    </subcellularLocation>
    <subcellularLocation>
        <location>Chromosome</location>
    </subcellularLocation>
</comment>
<comment type="tissue specificity">
    <text>Testis.</text>
</comment>
<sequence>PRRRTRRASRPVRRRRPRRVSRRRRARRRR</sequence>